<evidence type="ECO:0000255" key="1">
    <source>
        <dbReference type="HAMAP-Rule" id="MF_00380"/>
    </source>
</evidence>
<keyword id="KW-0233">DNA recombination</keyword>
<keyword id="KW-0238">DNA-binding</keyword>
<keyword id="KW-0804">Transcription</keyword>
<keyword id="KW-0805">Transcription regulation</keyword>
<keyword id="KW-0810">Translation regulation</keyword>
<dbReference type="EMBL" id="AP007255">
    <property type="protein sequence ID" value="BAE51159.1"/>
    <property type="molecule type" value="Genomic_DNA"/>
</dbReference>
<dbReference type="RefSeq" id="WP_011384751.1">
    <property type="nucleotide sequence ID" value="NC_007626.1"/>
</dbReference>
<dbReference type="SMR" id="Q2W4R6"/>
<dbReference type="STRING" id="342108.amb2355"/>
<dbReference type="KEGG" id="mag:amb2355"/>
<dbReference type="HOGENOM" id="CLU_105066_1_1_5"/>
<dbReference type="OrthoDB" id="9804203at2"/>
<dbReference type="Proteomes" id="UP000007058">
    <property type="component" value="Chromosome"/>
</dbReference>
<dbReference type="GO" id="GO:0005829">
    <property type="term" value="C:cytosol"/>
    <property type="evidence" value="ECO:0007669"/>
    <property type="project" value="TreeGrafter"/>
</dbReference>
<dbReference type="GO" id="GO:0003677">
    <property type="term" value="F:DNA binding"/>
    <property type="evidence" value="ECO:0007669"/>
    <property type="project" value="UniProtKB-UniRule"/>
</dbReference>
<dbReference type="GO" id="GO:0030527">
    <property type="term" value="F:structural constituent of chromatin"/>
    <property type="evidence" value="ECO:0007669"/>
    <property type="project" value="InterPro"/>
</dbReference>
<dbReference type="GO" id="GO:0006310">
    <property type="term" value="P:DNA recombination"/>
    <property type="evidence" value="ECO:0007669"/>
    <property type="project" value="UniProtKB-UniRule"/>
</dbReference>
<dbReference type="GO" id="GO:0009893">
    <property type="term" value="P:positive regulation of metabolic process"/>
    <property type="evidence" value="ECO:0007669"/>
    <property type="project" value="UniProtKB-ARBA"/>
</dbReference>
<dbReference type="GO" id="GO:0006355">
    <property type="term" value="P:regulation of DNA-templated transcription"/>
    <property type="evidence" value="ECO:0007669"/>
    <property type="project" value="UniProtKB-UniRule"/>
</dbReference>
<dbReference type="GO" id="GO:0006417">
    <property type="term" value="P:regulation of translation"/>
    <property type="evidence" value="ECO:0007669"/>
    <property type="project" value="UniProtKB-UniRule"/>
</dbReference>
<dbReference type="CDD" id="cd13835">
    <property type="entry name" value="IHF_A"/>
    <property type="match status" value="1"/>
</dbReference>
<dbReference type="Gene3D" id="4.10.520.10">
    <property type="entry name" value="IHF-like DNA-binding proteins"/>
    <property type="match status" value="1"/>
</dbReference>
<dbReference type="HAMAP" id="MF_00380">
    <property type="entry name" value="IHF_alpha"/>
    <property type="match status" value="1"/>
</dbReference>
<dbReference type="InterPro" id="IPR000119">
    <property type="entry name" value="Hist_DNA-bd"/>
</dbReference>
<dbReference type="InterPro" id="IPR020816">
    <property type="entry name" value="Histone-like_DNA-bd_CS"/>
</dbReference>
<dbReference type="InterPro" id="IPR010992">
    <property type="entry name" value="IHF-like_DNA-bd_dom_sf"/>
</dbReference>
<dbReference type="InterPro" id="IPR005684">
    <property type="entry name" value="IHF_alpha"/>
</dbReference>
<dbReference type="NCBIfam" id="TIGR00987">
    <property type="entry name" value="himA"/>
    <property type="match status" value="1"/>
</dbReference>
<dbReference type="NCBIfam" id="NF001401">
    <property type="entry name" value="PRK00285.1"/>
    <property type="match status" value="1"/>
</dbReference>
<dbReference type="PANTHER" id="PTHR33175">
    <property type="entry name" value="DNA-BINDING PROTEIN HU"/>
    <property type="match status" value="1"/>
</dbReference>
<dbReference type="PANTHER" id="PTHR33175:SF2">
    <property type="entry name" value="INTEGRATION HOST FACTOR SUBUNIT ALPHA"/>
    <property type="match status" value="1"/>
</dbReference>
<dbReference type="Pfam" id="PF00216">
    <property type="entry name" value="Bac_DNA_binding"/>
    <property type="match status" value="1"/>
</dbReference>
<dbReference type="PRINTS" id="PR01727">
    <property type="entry name" value="DNABINDINGHU"/>
</dbReference>
<dbReference type="SMART" id="SM00411">
    <property type="entry name" value="BHL"/>
    <property type="match status" value="1"/>
</dbReference>
<dbReference type="SUPFAM" id="SSF47729">
    <property type="entry name" value="IHF-like DNA-binding proteins"/>
    <property type="match status" value="1"/>
</dbReference>
<dbReference type="PROSITE" id="PS00045">
    <property type="entry name" value="HISTONE_LIKE"/>
    <property type="match status" value="1"/>
</dbReference>
<name>IHFA_PARM1</name>
<reference key="1">
    <citation type="journal article" date="2005" name="DNA Res.">
        <title>Complete genome sequence of the facultative anaerobic magnetotactic bacterium Magnetospirillum sp. strain AMB-1.</title>
        <authorList>
            <person name="Matsunaga T."/>
            <person name="Okamura Y."/>
            <person name="Fukuda Y."/>
            <person name="Wahyudi A.T."/>
            <person name="Murase Y."/>
            <person name="Takeyama H."/>
        </authorList>
    </citation>
    <scope>NUCLEOTIDE SEQUENCE [LARGE SCALE GENOMIC DNA]</scope>
    <source>
        <strain>ATCC 700264 / AMB-1</strain>
    </source>
</reference>
<feature type="chain" id="PRO_0000277740" description="Integration host factor subunit alpha">
    <location>
        <begin position="1"/>
        <end position="106"/>
    </location>
</feature>
<accession>Q2W4R6</accession>
<proteinExistence type="inferred from homology"/>
<protein>
    <recommendedName>
        <fullName evidence="1">Integration host factor subunit alpha</fullName>
        <shortName evidence="1">IHF-alpha</shortName>
    </recommendedName>
</protein>
<sequence>MTDKTITRAQLSEAVYQEVGLSRNESADLLEAVLDEISGALAKGDAVKISSFGSFSVRSKGQRIGRNPKTGEEVPITPRRVLVFRPSQLLKKKINDGMAAKRGGAK</sequence>
<organism>
    <name type="scientific">Paramagnetospirillum magneticum (strain ATCC 700264 / AMB-1)</name>
    <name type="common">Magnetospirillum magneticum</name>
    <dbReference type="NCBI Taxonomy" id="342108"/>
    <lineage>
        <taxon>Bacteria</taxon>
        <taxon>Pseudomonadati</taxon>
        <taxon>Pseudomonadota</taxon>
        <taxon>Alphaproteobacteria</taxon>
        <taxon>Rhodospirillales</taxon>
        <taxon>Magnetospirillaceae</taxon>
        <taxon>Paramagnetospirillum</taxon>
    </lineage>
</organism>
<comment type="function">
    <text evidence="1">This protein is one of the two subunits of integration host factor, a specific DNA-binding protein that functions in genetic recombination as well as in transcriptional and translational control.</text>
</comment>
<comment type="subunit">
    <text evidence="1">Heterodimer of an alpha and a beta chain.</text>
</comment>
<comment type="similarity">
    <text evidence="1">Belongs to the bacterial histone-like protein family.</text>
</comment>
<gene>
    <name evidence="1" type="primary">ihfA</name>
    <name evidence="1" type="synonym">himA</name>
    <name type="ordered locus">amb2355</name>
</gene>